<gene>
    <name evidence="1" type="primary">thrB</name>
    <name type="ordered locus">GbCGDNIH1_1876</name>
</gene>
<comment type="catalytic activity">
    <reaction evidence="1">
        <text>L-homoserine + ATP = O-phospho-L-homoserine + ADP + H(+)</text>
        <dbReference type="Rhea" id="RHEA:13985"/>
        <dbReference type="ChEBI" id="CHEBI:15378"/>
        <dbReference type="ChEBI" id="CHEBI:30616"/>
        <dbReference type="ChEBI" id="CHEBI:57476"/>
        <dbReference type="ChEBI" id="CHEBI:57590"/>
        <dbReference type="ChEBI" id="CHEBI:456216"/>
        <dbReference type="EC" id="2.7.1.39"/>
    </reaction>
</comment>
<comment type="pathway">
    <text evidence="1">Amino-acid biosynthesis; L-threonine biosynthesis; L-threonine from L-aspartate: step 4/5.</text>
</comment>
<comment type="similarity">
    <text evidence="1">Belongs to the pseudomonas-type ThrB family.</text>
</comment>
<name>KHSE_GRABC</name>
<evidence type="ECO:0000255" key="1">
    <source>
        <dbReference type="HAMAP-Rule" id="MF_00301"/>
    </source>
</evidence>
<reference key="1">
    <citation type="journal article" date="2007" name="J. Bacteriol.">
        <title>Genome sequence analysis of the emerging human pathogenic acetic acid bacterium Granulibacter bethesdensis.</title>
        <authorList>
            <person name="Greenberg D.E."/>
            <person name="Porcella S.F."/>
            <person name="Zelazny A.M."/>
            <person name="Virtaneva K."/>
            <person name="Sturdevant D.E."/>
            <person name="Kupko J.J. III"/>
            <person name="Barbian K.D."/>
            <person name="Babar A."/>
            <person name="Dorward D.W."/>
            <person name="Holland S.M."/>
        </authorList>
    </citation>
    <scope>NUCLEOTIDE SEQUENCE [LARGE SCALE GENOMIC DNA]</scope>
    <source>
        <strain>ATCC BAA-1260 / CGDNIH1</strain>
    </source>
</reference>
<protein>
    <recommendedName>
        <fullName evidence="1">Homoserine kinase</fullName>
        <shortName evidence="1">HK</shortName>
        <shortName evidence="1">HSK</shortName>
        <ecNumber evidence="1">2.7.1.39</ecNumber>
    </recommendedName>
</protein>
<proteinExistence type="inferred from homology"/>
<accession>Q0BQX8</accession>
<dbReference type="EC" id="2.7.1.39" evidence="1"/>
<dbReference type="EMBL" id="CP000394">
    <property type="protein sequence ID" value="ABI62774.1"/>
    <property type="molecule type" value="Genomic_DNA"/>
</dbReference>
<dbReference type="RefSeq" id="WP_011632576.1">
    <property type="nucleotide sequence ID" value="NC_008343.2"/>
</dbReference>
<dbReference type="SMR" id="Q0BQX8"/>
<dbReference type="STRING" id="391165.GbCGDNIH1_1876"/>
<dbReference type="GeneID" id="69746066"/>
<dbReference type="KEGG" id="gbe:GbCGDNIH1_1876"/>
<dbReference type="eggNOG" id="COG2334">
    <property type="taxonomic scope" value="Bacteria"/>
</dbReference>
<dbReference type="HOGENOM" id="CLU_053300_1_0_5"/>
<dbReference type="OrthoDB" id="9777460at2"/>
<dbReference type="UniPathway" id="UPA00050">
    <property type="reaction ID" value="UER00064"/>
</dbReference>
<dbReference type="Proteomes" id="UP000001963">
    <property type="component" value="Chromosome"/>
</dbReference>
<dbReference type="GO" id="GO:0005524">
    <property type="term" value="F:ATP binding"/>
    <property type="evidence" value="ECO:0007669"/>
    <property type="project" value="UniProtKB-KW"/>
</dbReference>
<dbReference type="GO" id="GO:0004413">
    <property type="term" value="F:homoserine kinase activity"/>
    <property type="evidence" value="ECO:0007669"/>
    <property type="project" value="UniProtKB-UniRule"/>
</dbReference>
<dbReference type="GO" id="GO:0009088">
    <property type="term" value="P:threonine biosynthetic process"/>
    <property type="evidence" value="ECO:0007669"/>
    <property type="project" value="UniProtKB-UniRule"/>
</dbReference>
<dbReference type="CDD" id="cd05153">
    <property type="entry name" value="HomoserineK_II"/>
    <property type="match status" value="1"/>
</dbReference>
<dbReference type="Gene3D" id="3.90.1200.10">
    <property type="match status" value="1"/>
</dbReference>
<dbReference type="Gene3D" id="3.30.200.20">
    <property type="entry name" value="Phosphorylase Kinase, domain 1"/>
    <property type="match status" value="1"/>
</dbReference>
<dbReference type="HAMAP" id="MF_00301">
    <property type="entry name" value="Homoser_kinase_2"/>
    <property type="match status" value="1"/>
</dbReference>
<dbReference type="InterPro" id="IPR002575">
    <property type="entry name" value="Aminoglycoside_PTrfase"/>
</dbReference>
<dbReference type="InterPro" id="IPR005280">
    <property type="entry name" value="Homoserine_kinase_II"/>
</dbReference>
<dbReference type="InterPro" id="IPR011009">
    <property type="entry name" value="Kinase-like_dom_sf"/>
</dbReference>
<dbReference type="InterPro" id="IPR050249">
    <property type="entry name" value="Pseudomonas-type_ThrB"/>
</dbReference>
<dbReference type="NCBIfam" id="NF003558">
    <property type="entry name" value="PRK05231.1"/>
    <property type="match status" value="1"/>
</dbReference>
<dbReference type="NCBIfam" id="TIGR00938">
    <property type="entry name" value="thrB_alt"/>
    <property type="match status" value="1"/>
</dbReference>
<dbReference type="PANTHER" id="PTHR21064:SF6">
    <property type="entry name" value="AMINOGLYCOSIDE PHOSPHOTRANSFERASE DOMAIN-CONTAINING PROTEIN"/>
    <property type="match status" value="1"/>
</dbReference>
<dbReference type="PANTHER" id="PTHR21064">
    <property type="entry name" value="AMINOGLYCOSIDE PHOSPHOTRANSFERASE DOMAIN-CONTAINING PROTEIN-RELATED"/>
    <property type="match status" value="1"/>
</dbReference>
<dbReference type="Pfam" id="PF01636">
    <property type="entry name" value="APH"/>
    <property type="match status" value="1"/>
</dbReference>
<dbReference type="SUPFAM" id="SSF56112">
    <property type="entry name" value="Protein kinase-like (PK-like)"/>
    <property type="match status" value="1"/>
</dbReference>
<keyword id="KW-0028">Amino-acid biosynthesis</keyword>
<keyword id="KW-0067">ATP-binding</keyword>
<keyword id="KW-0418">Kinase</keyword>
<keyword id="KW-0547">Nucleotide-binding</keyword>
<keyword id="KW-1185">Reference proteome</keyword>
<keyword id="KW-0791">Threonine biosynthesis</keyword>
<keyword id="KW-0808">Transferase</keyword>
<feature type="chain" id="PRO_0000300792" description="Homoserine kinase">
    <location>
        <begin position="1"/>
        <end position="319"/>
    </location>
</feature>
<organism>
    <name type="scientific">Granulibacter bethesdensis (strain ATCC BAA-1260 / CGDNIH1)</name>
    <dbReference type="NCBI Taxonomy" id="391165"/>
    <lineage>
        <taxon>Bacteria</taxon>
        <taxon>Pseudomonadati</taxon>
        <taxon>Pseudomonadota</taxon>
        <taxon>Alphaproteobacteria</taxon>
        <taxon>Acetobacterales</taxon>
        <taxon>Acetobacteraceae</taxon>
        <taxon>Granulibacter</taxon>
    </lineage>
</organism>
<sequence length="319" mass="34916">MAVYTEVTDEALAAFLAEYDIGTAVAFRGIAEGVENSNYVLRTTGGDYILTLYEKRVDPNDLPWFLGLMEHLAARGITCPQPVRGRDGQALRMLCGRHAAITGFLPGVWPRKVQVAHCHPVGEVLAKLHEAGADYAPTRLNALGPEGWPPLLAICRSRADEISPGLGEELQKALDRVLTAWPSDLPAGHIHADLFPDNVFFLDDRLSGVIDFYFAATDALAYDIAIALNAWCFESDHAYNITKGSALLRGYNAIRTLTEAEKAALPVLCQGAALRFALTRLFDWLNTPPGAMVTRKDPMDYVHRLRFHLSAPNAGAYGL</sequence>